<gene>
    <name evidence="5" type="primary">ecdH</name>
</gene>
<sequence>MEFPLYTTTLLCGVISSTLLLLLLNKLTTWEHIVPSKVPWIDRRSEPFGYLRAKCRSFFNMKENITEAYYAFNKEGRAAALAIAFGRPQIILPPKYIRWIIDQPESVLSIDPIHNEFHAFVRDGLVGDHLVQEVLRRELAGHLAHLTREMNEEIADSVESVLGVSKEWATVPLRDSMRIIIARISNRLFVGKELCRNEDYIRNAVGLGMAVMPQTLVQDLLPQLLKGPLSFATKLFTRITLAGLSGHLSPVVRQRIQDVQTAEKDQLPLELLTWMAQRALQRGESATSIEEKLIARIAMANLASIETTTNTITKCMEDMTALSNETGGYLELMRQEAHTVLEACNYSPIKADLEKLVHIENALKESLRLAVVFPGLIRQVTSRTGVTLDDGTHLPHGARISVAAYAIHRDDANWTDAARYDPSRHEKASLPMSRGSEQLLSFGLGKRACPGRFFVTDELKLLFAHILTKYEFKVIKPPVTKVGLLKELTMRGPQEQLVIRRVK</sequence>
<dbReference type="EC" id="1.-.-.-" evidence="7"/>
<dbReference type="EMBL" id="JX421684">
    <property type="protein sequence ID" value="AFT91389.1"/>
    <property type="molecule type" value="Genomic_DNA"/>
</dbReference>
<dbReference type="SMR" id="K0E684"/>
<dbReference type="GlyCosmos" id="K0E684">
    <property type="glycosylation" value="3 sites, No reported glycans"/>
</dbReference>
<dbReference type="BioCyc" id="MetaCyc:MONOMER-19239"/>
<dbReference type="GO" id="GO:0016020">
    <property type="term" value="C:membrane"/>
    <property type="evidence" value="ECO:0007669"/>
    <property type="project" value="UniProtKB-SubCell"/>
</dbReference>
<dbReference type="GO" id="GO:0020037">
    <property type="term" value="F:heme binding"/>
    <property type="evidence" value="ECO:0007669"/>
    <property type="project" value="InterPro"/>
</dbReference>
<dbReference type="GO" id="GO:0005506">
    <property type="term" value="F:iron ion binding"/>
    <property type="evidence" value="ECO:0007669"/>
    <property type="project" value="InterPro"/>
</dbReference>
<dbReference type="GO" id="GO:0004497">
    <property type="term" value="F:monooxygenase activity"/>
    <property type="evidence" value="ECO:0007669"/>
    <property type="project" value="UniProtKB-KW"/>
</dbReference>
<dbReference type="GO" id="GO:0016705">
    <property type="term" value="F:oxidoreductase activity, acting on paired donors, with incorporation or reduction of molecular oxygen"/>
    <property type="evidence" value="ECO:0007669"/>
    <property type="project" value="InterPro"/>
</dbReference>
<dbReference type="GO" id="GO:0019748">
    <property type="term" value="P:secondary metabolic process"/>
    <property type="evidence" value="ECO:0007669"/>
    <property type="project" value="UniProtKB-ARBA"/>
</dbReference>
<dbReference type="CDD" id="cd11041">
    <property type="entry name" value="CYP503A1-like"/>
    <property type="match status" value="1"/>
</dbReference>
<dbReference type="Gene3D" id="1.10.630.10">
    <property type="entry name" value="Cytochrome P450"/>
    <property type="match status" value="1"/>
</dbReference>
<dbReference type="InterPro" id="IPR001128">
    <property type="entry name" value="Cyt_P450"/>
</dbReference>
<dbReference type="InterPro" id="IPR017972">
    <property type="entry name" value="Cyt_P450_CS"/>
</dbReference>
<dbReference type="InterPro" id="IPR002401">
    <property type="entry name" value="Cyt_P450_E_grp-I"/>
</dbReference>
<dbReference type="InterPro" id="IPR036396">
    <property type="entry name" value="Cyt_P450_sf"/>
</dbReference>
<dbReference type="PANTHER" id="PTHR46206">
    <property type="entry name" value="CYTOCHROME P450"/>
    <property type="match status" value="1"/>
</dbReference>
<dbReference type="PANTHER" id="PTHR46206:SF1">
    <property type="entry name" value="P450, PUTATIVE (EUROFUNG)-RELATED"/>
    <property type="match status" value="1"/>
</dbReference>
<dbReference type="Pfam" id="PF00067">
    <property type="entry name" value="p450"/>
    <property type="match status" value="1"/>
</dbReference>
<dbReference type="PRINTS" id="PR00463">
    <property type="entry name" value="EP450I"/>
</dbReference>
<dbReference type="SUPFAM" id="SSF48264">
    <property type="entry name" value="Cytochrome P450"/>
    <property type="match status" value="1"/>
</dbReference>
<dbReference type="PROSITE" id="PS00086">
    <property type="entry name" value="CYTOCHROME_P450"/>
    <property type="match status" value="1"/>
</dbReference>
<evidence type="ECO:0000250" key="1">
    <source>
        <dbReference type="UniProtKB" id="P04798"/>
    </source>
</evidence>
<evidence type="ECO:0000255" key="2"/>
<evidence type="ECO:0000255" key="3">
    <source>
        <dbReference type="PROSITE-ProRule" id="PRU00498"/>
    </source>
</evidence>
<evidence type="ECO:0000269" key="4">
    <source>
    </source>
</evidence>
<evidence type="ECO:0000303" key="5">
    <source>
    </source>
</evidence>
<evidence type="ECO:0000305" key="6"/>
<evidence type="ECO:0000305" key="7">
    <source>
    </source>
</evidence>
<feature type="chain" id="PRO_0000443831" description="Cytochrome P450 monooxygenase ecdH">
    <location>
        <begin position="1"/>
        <end position="503"/>
    </location>
</feature>
<feature type="transmembrane region" description="Helical" evidence="2">
    <location>
        <begin position="8"/>
        <end position="24"/>
    </location>
</feature>
<feature type="binding site" description="axial binding residue" evidence="1">
    <location>
        <position position="449"/>
    </location>
    <ligand>
        <name>heme</name>
        <dbReference type="ChEBI" id="CHEBI:30413"/>
    </ligand>
    <ligandPart>
        <name>Fe</name>
        <dbReference type="ChEBI" id="CHEBI:18248"/>
    </ligandPart>
</feature>
<feature type="glycosylation site" description="N-linked (GlcNAc...) asparagine" evidence="3">
    <location>
        <position position="64"/>
    </location>
</feature>
<feature type="glycosylation site" description="N-linked (GlcNAc...) asparagine" evidence="3">
    <location>
        <position position="324"/>
    </location>
</feature>
<feature type="glycosylation site" description="N-linked (GlcNAc...) asparagine" evidence="3">
    <location>
        <position position="413"/>
    </location>
</feature>
<name>ECDH_ASPRU</name>
<reference key="1">
    <citation type="journal article" date="2012" name="J. Am. Chem. Soc.">
        <title>Identification and characterization of the echinocandin B biosynthetic gene cluster from Emericella rugulosa NRRL 11440.</title>
        <authorList>
            <person name="Cacho R.A."/>
            <person name="Jiang W."/>
            <person name="Chooi Y.H."/>
            <person name="Walsh C.T."/>
            <person name="Tang Y."/>
        </authorList>
    </citation>
    <scope>NUCLEOTIDE SEQUENCE [GENOMIC DNA]</scope>
    <scope>FUNCTION</scope>
    <scope>PATHWAY</scope>
    <scope>BIOTECHNOLOGY</scope>
    <source>
        <strain>ATCC 58397 / NRRL 11440</strain>
    </source>
</reference>
<accession>K0E684</accession>
<organism>
    <name type="scientific">Aspergillus rugulosus</name>
    <name type="common">Emericella rugulosa</name>
    <dbReference type="NCBI Taxonomy" id="41736"/>
    <lineage>
        <taxon>Eukaryota</taxon>
        <taxon>Fungi</taxon>
        <taxon>Dikarya</taxon>
        <taxon>Ascomycota</taxon>
        <taxon>Pezizomycotina</taxon>
        <taxon>Eurotiomycetes</taxon>
        <taxon>Eurotiomycetidae</taxon>
        <taxon>Eurotiales</taxon>
        <taxon>Aspergillaceae</taxon>
        <taxon>Aspergillus</taxon>
        <taxon>Aspergillus subgen. Nidulantes</taxon>
    </lineage>
</organism>
<comment type="function">
    <text evidence="4">Cytochrome P450 monooxygenase; part of the gene cluster that mediates the biosynthesis of echinocandin B, a fungal lipidated cyclic hexapeptide that acts as an antifungal agent (PubMed:22998630). Linoleoyl-AMP, produced by the fatty-acyl-AMP ligase ecdI, is transferred to the initiation carrier domain (T0) of ecdA (PubMed:22998630). The linoleoyl-S-phosphopantetheinyl-T0 is sequentially extended with L-ornithine, L-threonine, L-proline, L-homotyrosine, L-threonine, and 4R-methyl-L-proline to form the linear hexapeptide (PubMed:22998630). Thereafter, the terminal condensation (C7) performs macrocyclization of the NRPS product and the cyclic scaffold is released from ecdA (PubMed:22998630). All six of the amino acid residues are hydroxylated, including 4R,5R-dihydroxy-L-ornithine, 4R-hydroxyl-L-proline, 3S,4S-dihydroxy-L-homotyrosine, and 3S-hydroxyl-4S-methyl-L-prolin (PubMed:22998630). In the pathway, all the hydroxylation reactions are proposed to occur following completion of the cyclic peptide, so the unhydroxylated precursor produced by ecdA will undergo six rounds of hydroxylation (PubMed:22998630). Five hydroxylase genes (ecdG, ecdH, ecdK, htyE and htyF) are embedded within the echinocandin B (ecd) and L-homotyrosine (hty) clusters (PubMed:22998630).</text>
</comment>
<comment type="cofactor">
    <cofactor evidence="1">
        <name>heme</name>
        <dbReference type="ChEBI" id="CHEBI:30413"/>
    </cofactor>
</comment>
<comment type="pathway">
    <text evidence="7">Antifungal biosynthesis.</text>
</comment>
<comment type="subcellular location">
    <subcellularLocation>
        <location evidence="2">Membrane</location>
        <topology evidence="2">Single-pass membrane protein</topology>
    </subcellularLocation>
</comment>
<comment type="biotechnology">
    <text evidence="4">Due to their effectiveness as antifungal agents, echinocandin derivatives can be used for the treatment of human invasive candidiasis (PubMed:22998630).</text>
</comment>
<comment type="similarity">
    <text evidence="6">Belongs to the cytochrome P450 family.</text>
</comment>
<protein>
    <recommendedName>
        <fullName evidence="5">Cytochrome P450 monooxygenase ecdH</fullName>
        <ecNumber evidence="7">1.-.-.-</ecNumber>
    </recommendedName>
    <alternativeName>
        <fullName evidence="5">Echinocandin B biosynthetic cluster protein H</fullName>
    </alternativeName>
</protein>
<keyword id="KW-0325">Glycoprotein</keyword>
<keyword id="KW-0349">Heme</keyword>
<keyword id="KW-0408">Iron</keyword>
<keyword id="KW-0472">Membrane</keyword>
<keyword id="KW-0479">Metal-binding</keyword>
<keyword id="KW-0503">Monooxygenase</keyword>
<keyword id="KW-0560">Oxidoreductase</keyword>
<keyword id="KW-0812">Transmembrane</keyword>
<keyword id="KW-1133">Transmembrane helix</keyword>
<proteinExistence type="evidence at protein level"/>